<protein>
    <recommendedName>
        <fullName evidence="1">Chaperonin GroEL</fullName>
        <ecNumber evidence="1">5.6.1.7</ecNumber>
    </recommendedName>
    <alternativeName>
        <fullName evidence="1">60 kDa chaperonin</fullName>
    </alternativeName>
    <alternativeName>
        <fullName evidence="1">Chaperonin-60</fullName>
        <shortName evidence="1">Cpn60</shortName>
    </alternativeName>
</protein>
<comment type="function">
    <text evidence="1">Together with its co-chaperonin GroES, plays an essential role in assisting protein folding. The GroEL-GroES system forms a nano-cage that allows encapsulation of the non-native substrate proteins and provides a physical environment optimized to promote and accelerate protein folding.</text>
</comment>
<comment type="function">
    <text>May play a protective role against the defense mechanisms generated by the infected macrophages.</text>
</comment>
<comment type="catalytic activity">
    <reaction evidence="1">
        <text>ATP + H2O + a folded polypeptide = ADP + phosphate + an unfolded polypeptide.</text>
        <dbReference type="EC" id="5.6.1.7"/>
    </reaction>
</comment>
<comment type="subunit">
    <text evidence="1">Forms a cylinder of 14 subunits composed of two heptameric rings stacked back-to-back. Interacts with the co-chaperonin GroES.</text>
</comment>
<comment type="subcellular location">
    <subcellularLocation>
        <location evidence="1">Cytoplasm</location>
    </subcellularLocation>
</comment>
<comment type="induction">
    <text>Not induced by heat shock.</text>
</comment>
<comment type="similarity">
    <text evidence="1">Belongs to the chaperonin (HSP60) family.</text>
</comment>
<name>CH60_LEGMI</name>
<proteinExistence type="evidence at transcript level"/>
<reference key="1">
    <citation type="journal article" date="1991" name="FEMS Microbiol. Lett.">
        <title>Sequence analysis of the Legionella micdadei groELS operon.</title>
        <authorList>
            <person name="Hindersson P."/>
            <person name="Hoiby N."/>
            <person name="Bangsborg J."/>
        </authorList>
    </citation>
    <scope>NUCLEOTIDE SEQUENCE [GENOMIC DNA]</scope>
</reference>
<gene>
    <name evidence="1" type="primary">groEL</name>
    <name evidence="1" type="synonym">groL</name>
    <name type="synonym">mopA</name>
</gene>
<feature type="chain" id="PRO_0000063404" description="Chaperonin GroEL">
    <location>
        <begin position="1"/>
        <end position="546"/>
    </location>
</feature>
<feature type="binding site" evidence="1">
    <location>
        <begin position="29"/>
        <end position="32"/>
    </location>
    <ligand>
        <name>ATP</name>
        <dbReference type="ChEBI" id="CHEBI:30616"/>
    </ligand>
</feature>
<feature type="binding site" evidence="1">
    <location>
        <position position="50"/>
    </location>
    <ligand>
        <name>ATP</name>
        <dbReference type="ChEBI" id="CHEBI:30616"/>
    </ligand>
</feature>
<feature type="binding site" evidence="1">
    <location>
        <begin position="86"/>
        <end position="90"/>
    </location>
    <ligand>
        <name>ATP</name>
        <dbReference type="ChEBI" id="CHEBI:30616"/>
    </ligand>
</feature>
<feature type="binding site" evidence="1">
    <location>
        <position position="412"/>
    </location>
    <ligand>
        <name>ATP</name>
        <dbReference type="ChEBI" id="CHEBI:30616"/>
    </ligand>
</feature>
<feature type="binding site" evidence="1">
    <location>
        <begin position="476"/>
        <end position="478"/>
    </location>
    <ligand>
        <name>ATP</name>
        <dbReference type="ChEBI" id="CHEBI:30616"/>
    </ligand>
</feature>
<feature type="binding site" evidence="1">
    <location>
        <position position="492"/>
    </location>
    <ligand>
        <name>ATP</name>
        <dbReference type="ChEBI" id="CHEBI:30616"/>
    </ligand>
</feature>
<accession>P26194</accession>
<sequence>MAKELRFGDDARQQMLAGVNALADAVKATMGPSGRNVVLERSFGAPTVTKDGVSVAKEIEFENRFKNMGAQMVKEVAAKTSDTAGDGTTTATVLARAIVVEGHKAVAAGMNPMDLKRGIDKAVAAVTKKLQEMSKPCKDGKAIAQVGTISANSDQAIGSIIAEAMEKVGKEGVITVEDGNSLENELAVVEGMQFDRGYISPYFINNQQNMSAELEHPFILLVDKKISTIRDMLSVLEAVAKSGPSLLIIAEDVEGEALATLVVNNMRGIVKVCAVKAPGFGDRRKAMLQDIAILTAGEVISEEVGTSLESATLDSLGTAKRVVVTKENTTIIDGEGKAADINARITQIRAQMEETTSDYDREKLQERVAKLAGGVAVIKLVLLPNRMKRKARVEDALHATRAAVEEGIVAGGGVALIRAQKALDGLKGENADQDMGINILRRAIESPLRQIVANAGYEPSVIVNKVAESKDNFGFNAATGEYGDMVEMGILDPTKVTRTALQNAASVASLMLTTECMVADLPKKEEPMGAGEMGGMGGMGGMGGMM</sequence>
<evidence type="ECO:0000255" key="1">
    <source>
        <dbReference type="HAMAP-Rule" id="MF_00600"/>
    </source>
</evidence>
<dbReference type="EC" id="5.6.1.7" evidence="1"/>
<dbReference type="EMBL" id="X57520">
    <property type="status" value="NOT_ANNOTATED_CDS"/>
    <property type="molecule type" value="Genomic_DNA"/>
</dbReference>
<dbReference type="PIR" id="B54539">
    <property type="entry name" value="B54539"/>
</dbReference>
<dbReference type="SMR" id="P26194"/>
<dbReference type="STRING" id="451.B6N58_04220"/>
<dbReference type="GO" id="GO:0005737">
    <property type="term" value="C:cytoplasm"/>
    <property type="evidence" value="ECO:0007669"/>
    <property type="project" value="UniProtKB-SubCell"/>
</dbReference>
<dbReference type="GO" id="GO:0005524">
    <property type="term" value="F:ATP binding"/>
    <property type="evidence" value="ECO:0007669"/>
    <property type="project" value="UniProtKB-UniRule"/>
</dbReference>
<dbReference type="GO" id="GO:0140662">
    <property type="term" value="F:ATP-dependent protein folding chaperone"/>
    <property type="evidence" value="ECO:0007669"/>
    <property type="project" value="InterPro"/>
</dbReference>
<dbReference type="GO" id="GO:0016853">
    <property type="term" value="F:isomerase activity"/>
    <property type="evidence" value="ECO:0007669"/>
    <property type="project" value="UniProtKB-KW"/>
</dbReference>
<dbReference type="GO" id="GO:0051082">
    <property type="term" value="F:unfolded protein binding"/>
    <property type="evidence" value="ECO:0007669"/>
    <property type="project" value="UniProtKB-UniRule"/>
</dbReference>
<dbReference type="GO" id="GO:0042026">
    <property type="term" value="P:protein refolding"/>
    <property type="evidence" value="ECO:0007669"/>
    <property type="project" value="UniProtKB-UniRule"/>
</dbReference>
<dbReference type="CDD" id="cd03344">
    <property type="entry name" value="GroEL"/>
    <property type="match status" value="1"/>
</dbReference>
<dbReference type="FunFam" id="1.10.560.10:FF:000001">
    <property type="entry name" value="60 kDa chaperonin"/>
    <property type="match status" value="1"/>
</dbReference>
<dbReference type="FunFam" id="3.50.7.10:FF:000001">
    <property type="entry name" value="60 kDa chaperonin"/>
    <property type="match status" value="1"/>
</dbReference>
<dbReference type="Gene3D" id="3.50.7.10">
    <property type="entry name" value="GroEL"/>
    <property type="match status" value="1"/>
</dbReference>
<dbReference type="Gene3D" id="1.10.560.10">
    <property type="entry name" value="GroEL-like equatorial domain"/>
    <property type="match status" value="1"/>
</dbReference>
<dbReference type="Gene3D" id="3.30.260.10">
    <property type="entry name" value="TCP-1-like chaperonin intermediate domain"/>
    <property type="match status" value="1"/>
</dbReference>
<dbReference type="HAMAP" id="MF_00600">
    <property type="entry name" value="CH60"/>
    <property type="match status" value="1"/>
</dbReference>
<dbReference type="InterPro" id="IPR018370">
    <property type="entry name" value="Chaperonin_Cpn60_CS"/>
</dbReference>
<dbReference type="InterPro" id="IPR001844">
    <property type="entry name" value="Cpn60/GroEL"/>
</dbReference>
<dbReference type="InterPro" id="IPR002423">
    <property type="entry name" value="Cpn60/GroEL/TCP-1"/>
</dbReference>
<dbReference type="InterPro" id="IPR027409">
    <property type="entry name" value="GroEL-like_apical_dom_sf"/>
</dbReference>
<dbReference type="InterPro" id="IPR027413">
    <property type="entry name" value="GROEL-like_equatorial_sf"/>
</dbReference>
<dbReference type="InterPro" id="IPR027410">
    <property type="entry name" value="TCP-1-like_intermed_sf"/>
</dbReference>
<dbReference type="NCBIfam" id="TIGR02348">
    <property type="entry name" value="GroEL"/>
    <property type="match status" value="1"/>
</dbReference>
<dbReference type="NCBIfam" id="NF000592">
    <property type="entry name" value="PRK00013.1"/>
    <property type="match status" value="1"/>
</dbReference>
<dbReference type="NCBIfam" id="NF009487">
    <property type="entry name" value="PRK12849.1"/>
    <property type="match status" value="1"/>
</dbReference>
<dbReference type="NCBIfam" id="NF009488">
    <property type="entry name" value="PRK12850.1"/>
    <property type="match status" value="1"/>
</dbReference>
<dbReference type="NCBIfam" id="NF009489">
    <property type="entry name" value="PRK12851.1"/>
    <property type="match status" value="1"/>
</dbReference>
<dbReference type="PANTHER" id="PTHR45633">
    <property type="entry name" value="60 KDA HEAT SHOCK PROTEIN, MITOCHONDRIAL"/>
    <property type="match status" value="1"/>
</dbReference>
<dbReference type="Pfam" id="PF00118">
    <property type="entry name" value="Cpn60_TCP1"/>
    <property type="match status" value="1"/>
</dbReference>
<dbReference type="PRINTS" id="PR00298">
    <property type="entry name" value="CHAPERONIN60"/>
</dbReference>
<dbReference type="SUPFAM" id="SSF52029">
    <property type="entry name" value="GroEL apical domain-like"/>
    <property type="match status" value="1"/>
</dbReference>
<dbReference type="SUPFAM" id="SSF48592">
    <property type="entry name" value="GroEL equatorial domain-like"/>
    <property type="match status" value="1"/>
</dbReference>
<dbReference type="SUPFAM" id="SSF54849">
    <property type="entry name" value="GroEL-intermediate domain like"/>
    <property type="match status" value="1"/>
</dbReference>
<dbReference type="PROSITE" id="PS00296">
    <property type="entry name" value="CHAPERONINS_CPN60"/>
    <property type="match status" value="1"/>
</dbReference>
<organism>
    <name type="scientific">Legionella micdadei</name>
    <name type="common">Tatlockia micdadei</name>
    <dbReference type="NCBI Taxonomy" id="451"/>
    <lineage>
        <taxon>Bacteria</taxon>
        <taxon>Pseudomonadati</taxon>
        <taxon>Pseudomonadota</taxon>
        <taxon>Gammaproteobacteria</taxon>
        <taxon>Legionellales</taxon>
        <taxon>Legionellaceae</taxon>
        <taxon>Legionella</taxon>
    </lineage>
</organism>
<keyword id="KW-0067">ATP-binding</keyword>
<keyword id="KW-0143">Chaperone</keyword>
<keyword id="KW-0963">Cytoplasm</keyword>
<keyword id="KW-0413">Isomerase</keyword>
<keyword id="KW-0547">Nucleotide-binding</keyword>